<protein>
    <recommendedName>
        <fullName>Zinc finger CCCH domain-containing protein 52</fullName>
        <shortName>AtC3H52</shortName>
    </recommendedName>
</protein>
<gene>
    <name type="ordered locus">At5g06770</name>
    <name type="ORF">MPH15.13</name>
</gene>
<sequence>MDARKRGRPEAAASHNSNGGFKRSKQEMESISTGLGSKSKPCTKFFSTSGCPFGDNCHFLHYVPGGYNAAAQMTNLRPPVSQVSRNMQGSGGPGGRFSGRGDPGSGPVSIFGASTSKISVDASLAGAIIGKGGIHSKQICRETGAKLSIKDHERDPNLKIIELEGTFEQINVASGMVRELIGRLGSVKKPQGIGGPEGKPHPGSNYKTKICDRYSKGNCTYGDRCHFAHGESELRRSGIA</sequence>
<reference key="1">
    <citation type="submission" date="2000-05" db="EMBL/GenBank/DDBJ databases">
        <title>Structural analysis of Arabidopsis thaliana chromosome 5. XI.</title>
        <authorList>
            <person name="Kaneko T."/>
            <person name="Katoh T."/>
            <person name="Asamizu E."/>
            <person name="Sato S."/>
            <person name="Nakamura Y."/>
            <person name="Kotani H."/>
            <person name="Tabata S."/>
        </authorList>
    </citation>
    <scope>NUCLEOTIDE SEQUENCE [LARGE SCALE GENOMIC DNA]</scope>
    <source>
        <strain>cv. Columbia</strain>
    </source>
</reference>
<reference key="2">
    <citation type="journal article" date="2017" name="Plant J.">
        <title>Araport11: a complete reannotation of the Arabidopsis thaliana reference genome.</title>
        <authorList>
            <person name="Cheng C.Y."/>
            <person name="Krishnakumar V."/>
            <person name="Chan A.P."/>
            <person name="Thibaud-Nissen F."/>
            <person name="Schobel S."/>
            <person name="Town C.D."/>
        </authorList>
    </citation>
    <scope>GENOME REANNOTATION</scope>
    <source>
        <strain>cv. Columbia</strain>
    </source>
</reference>
<reference key="3">
    <citation type="journal article" date="2002" name="Science">
        <title>Functional annotation of a full-length Arabidopsis cDNA collection.</title>
        <authorList>
            <person name="Seki M."/>
            <person name="Narusaka M."/>
            <person name="Kamiya A."/>
            <person name="Ishida J."/>
            <person name="Satou M."/>
            <person name="Sakurai T."/>
            <person name="Nakajima M."/>
            <person name="Enju A."/>
            <person name="Akiyama K."/>
            <person name="Oono Y."/>
            <person name="Muramatsu M."/>
            <person name="Hayashizaki Y."/>
            <person name="Kawai J."/>
            <person name="Carninci P."/>
            <person name="Itoh M."/>
            <person name="Ishii Y."/>
            <person name="Arakawa T."/>
            <person name="Shibata K."/>
            <person name="Shinagawa A."/>
            <person name="Shinozaki K."/>
        </authorList>
    </citation>
    <scope>NUCLEOTIDE SEQUENCE [LARGE SCALE MRNA]</scope>
    <source>
        <strain>cv. Columbia</strain>
    </source>
</reference>
<reference key="4">
    <citation type="journal article" date="2003" name="Science">
        <title>Empirical analysis of transcriptional activity in the Arabidopsis genome.</title>
        <authorList>
            <person name="Yamada K."/>
            <person name="Lim J."/>
            <person name="Dale J.M."/>
            <person name="Chen H."/>
            <person name="Shinn P."/>
            <person name="Palm C.J."/>
            <person name="Southwick A.M."/>
            <person name="Wu H.C."/>
            <person name="Kim C.J."/>
            <person name="Nguyen M."/>
            <person name="Pham P.K."/>
            <person name="Cheuk R.F."/>
            <person name="Karlin-Newmann G."/>
            <person name="Liu S.X."/>
            <person name="Lam B."/>
            <person name="Sakano H."/>
            <person name="Wu T."/>
            <person name="Yu G."/>
            <person name="Miranda M."/>
            <person name="Quach H.L."/>
            <person name="Tripp M."/>
            <person name="Chang C.H."/>
            <person name="Lee J.M."/>
            <person name="Toriumi M.J."/>
            <person name="Chan M.M."/>
            <person name="Tang C.C."/>
            <person name="Onodera C.S."/>
            <person name="Deng J.M."/>
            <person name="Akiyama K."/>
            <person name="Ansari Y."/>
            <person name="Arakawa T."/>
            <person name="Banh J."/>
            <person name="Banno F."/>
            <person name="Bowser L."/>
            <person name="Brooks S.Y."/>
            <person name="Carninci P."/>
            <person name="Chao Q."/>
            <person name="Choy N."/>
            <person name="Enju A."/>
            <person name="Goldsmith A.D."/>
            <person name="Gurjal M."/>
            <person name="Hansen N.F."/>
            <person name="Hayashizaki Y."/>
            <person name="Johnson-Hopson C."/>
            <person name="Hsuan V.W."/>
            <person name="Iida K."/>
            <person name="Karnes M."/>
            <person name="Khan S."/>
            <person name="Koesema E."/>
            <person name="Ishida J."/>
            <person name="Jiang P.X."/>
            <person name="Jones T."/>
            <person name="Kawai J."/>
            <person name="Kamiya A."/>
            <person name="Meyers C."/>
            <person name="Nakajima M."/>
            <person name="Narusaka M."/>
            <person name="Seki M."/>
            <person name="Sakurai T."/>
            <person name="Satou M."/>
            <person name="Tamse R."/>
            <person name="Vaysberg M."/>
            <person name="Wallender E.K."/>
            <person name="Wong C."/>
            <person name="Yamamura Y."/>
            <person name="Yuan S."/>
            <person name="Shinozaki K."/>
            <person name="Davis R.W."/>
            <person name="Theologis A."/>
            <person name="Ecker J.R."/>
        </authorList>
    </citation>
    <scope>NUCLEOTIDE SEQUENCE [LARGE SCALE MRNA]</scope>
    <source>
        <strain>cv. Columbia</strain>
    </source>
</reference>
<reference key="5">
    <citation type="submission" date="2002-03" db="EMBL/GenBank/DDBJ databases">
        <title>Full-length cDNA from Arabidopsis thaliana.</title>
        <authorList>
            <person name="Brover V.V."/>
            <person name="Troukhan M.E."/>
            <person name="Alexandrov N.A."/>
            <person name="Lu Y.-P."/>
            <person name="Flavell R.B."/>
            <person name="Feldmann K.A."/>
        </authorList>
    </citation>
    <scope>NUCLEOTIDE SEQUENCE [LARGE SCALE MRNA]</scope>
</reference>
<reference key="6">
    <citation type="journal article" date="2008" name="BMC Genomics">
        <title>Genome-wide analysis of CCCH zinc finger family in Arabidopsis and rice.</title>
        <authorList>
            <person name="Wang D."/>
            <person name="Guo Y."/>
            <person name="Wu C."/>
            <person name="Yang G."/>
            <person name="Li Y."/>
            <person name="Zheng C."/>
        </authorList>
    </citation>
    <scope>NOMENCLATURE</scope>
</reference>
<accession>Q9FG30</accession>
<accession>Q8LC70</accession>
<name>C3H52_ARATH</name>
<keyword id="KW-0238">DNA-binding</keyword>
<keyword id="KW-0479">Metal-binding</keyword>
<keyword id="KW-1185">Reference proteome</keyword>
<keyword id="KW-0677">Repeat</keyword>
<keyword id="KW-0694">RNA-binding</keyword>
<keyword id="KW-0862">Zinc</keyword>
<keyword id="KW-0863">Zinc-finger</keyword>
<feature type="chain" id="PRO_0000372005" description="Zinc finger CCCH domain-containing protein 52">
    <location>
        <begin position="1"/>
        <end position="240"/>
    </location>
</feature>
<feature type="domain" description="KH" evidence="1">
    <location>
        <begin position="113"/>
        <end position="177"/>
    </location>
</feature>
<feature type="zinc finger region" description="C3H1-type 1" evidence="2">
    <location>
        <begin position="36"/>
        <end position="64"/>
    </location>
</feature>
<feature type="zinc finger region" description="C3H1-type 2" evidence="2">
    <location>
        <begin position="205"/>
        <end position="232"/>
    </location>
</feature>
<feature type="region of interest" description="Disordered" evidence="3">
    <location>
        <begin position="1"/>
        <end position="37"/>
    </location>
</feature>
<feature type="region of interest" description="Disordered" evidence="3">
    <location>
        <begin position="81"/>
        <end position="106"/>
    </location>
</feature>
<feature type="compositionally biased region" description="Gly residues" evidence="3">
    <location>
        <begin position="89"/>
        <end position="104"/>
    </location>
</feature>
<feature type="sequence conflict" description="In Ref. 5; AAM63810." evidence="4" ref="5">
    <original>T</original>
    <variation>K</variation>
    <location>
        <position position="74"/>
    </location>
</feature>
<comment type="interaction">
    <interactant intactId="EBI-4440997">
        <id>Q9FG30</id>
    </interactant>
    <interactant intactId="EBI-346271">
        <id>Q9SHZ6</id>
        <label>UBA1A</label>
    </interactant>
    <organismsDiffer>false</organismsDiffer>
    <experiments>3</experiments>
</comment>
<organism>
    <name type="scientific">Arabidopsis thaliana</name>
    <name type="common">Mouse-ear cress</name>
    <dbReference type="NCBI Taxonomy" id="3702"/>
    <lineage>
        <taxon>Eukaryota</taxon>
        <taxon>Viridiplantae</taxon>
        <taxon>Streptophyta</taxon>
        <taxon>Embryophyta</taxon>
        <taxon>Tracheophyta</taxon>
        <taxon>Spermatophyta</taxon>
        <taxon>Magnoliopsida</taxon>
        <taxon>eudicotyledons</taxon>
        <taxon>Gunneridae</taxon>
        <taxon>Pentapetalae</taxon>
        <taxon>rosids</taxon>
        <taxon>malvids</taxon>
        <taxon>Brassicales</taxon>
        <taxon>Brassicaceae</taxon>
        <taxon>Camelineae</taxon>
        <taxon>Arabidopsis</taxon>
    </lineage>
</organism>
<evidence type="ECO:0000255" key="1">
    <source>
        <dbReference type="PROSITE-ProRule" id="PRU00117"/>
    </source>
</evidence>
<evidence type="ECO:0000255" key="2">
    <source>
        <dbReference type="PROSITE-ProRule" id="PRU00723"/>
    </source>
</evidence>
<evidence type="ECO:0000256" key="3">
    <source>
        <dbReference type="SAM" id="MobiDB-lite"/>
    </source>
</evidence>
<evidence type="ECO:0000305" key="4"/>
<dbReference type="EMBL" id="AP002032">
    <property type="protein sequence ID" value="BAB09811.1"/>
    <property type="molecule type" value="Genomic_DNA"/>
</dbReference>
<dbReference type="EMBL" id="CP002688">
    <property type="protein sequence ID" value="AED91063.1"/>
    <property type="molecule type" value="Genomic_DNA"/>
</dbReference>
<dbReference type="EMBL" id="AK117974">
    <property type="protein sequence ID" value="BAC42611.1"/>
    <property type="molecule type" value="mRNA"/>
</dbReference>
<dbReference type="EMBL" id="BT005260">
    <property type="protein sequence ID" value="AAO63324.1"/>
    <property type="molecule type" value="mRNA"/>
</dbReference>
<dbReference type="EMBL" id="AY086759">
    <property type="protein sequence ID" value="AAM63810.1"/>
    <property type="molecule type" value="mRNA"/>
</dbReference>
<dbReference type="RefSeq" id="NP_196295.1">
    <property type="nucleotide sequence ID" value="NM_120760.3"/>
</dbReference>
<dbReference type="SMR" id="Q9FG30"/>
<dbReference type="BioGRID" id="15845">
    <property type="interactions" value="11"/>
</dbReference>
<dbReference type="FunCoup" id="Q9FG30">
    <property type="interactions" value="1670"/>
</dbReference>
<dbReference type="IntAct" id="Q9FG30">
    <property type="interactions" value="11"/>
</dbReference>
<dbReference type="STRING" id="3702.Q9FG30"/>
<dbReference type="PaxDb" id="3702-AT5G06770.1"/>
<dbReference type="ProteomicsDB" id="239158"/>
<dbReference type="EnsemblPlants" id="AT5G06770.1">
    <property type="protein sequence ID" value="AT5G06770.1"/>
    <property type="gene ID" value="AT5G06770"/>
</dbReference>
<dbReference type="GeneID" id="830566"/>
<dbReference type="Gramene" id="AT5G06770.1">
    <property type="protein sequence ID" value="AT5G06770.1"/>
    <property type="gene ID" value="AT5G06770"/>
</dbReference>
<dbReference type="KEGG" id="ath:AT5G06770"/>
<dbReference type="Araport" id="AT5G06770"/>
<dbReference type="TAIR" id="AT5G06770">
    <property type="gene designation" value="KHZ2"/>
</dbReference>
<dbReference type="eggNOG" id="KOG1677">
    <property type="taxonomic scope" value="Eukaryota"/>
</dbReference>
<dbReference type="HOGENOM" id="CLU_045191_2_0_1"/>
<dbReference type="InParanoid" id="Q9FG30"/>
<dbReference type="OMA" id="LDNSMPH"/>
<dbReference type="OrthoDB" id="410307at2759"/>
<dbReference type="PhylomeDB" id="Q9FG30"/>
<dbReference type="CD-CODE" id="4299E36E">
    <property type="entry name" value="Nucleolus"/>
</dbReference>
<dbReference type="PRO" id="PR:Q9FG30"/>
<dbReference type="Proteomes" id="UP000006548">
    <property type="component" value="Chromosome 5"/>
</dbReference>
<dbReference type="ExpressionAtlas" id="Q9FG30">
    <property type="expression patterns" value="baseline and differential"/>
</dbReference>
<dbReference type="GO" id="GO:0005634">
    <property type="term" value="C:nucleus"/>
    <property type="evidence" value="ECO:0000314"/>
    <property type="project" value="TAIR"/>
</dbReference>
<dbReference type="GO" id="GO:0003677">
    <property type="term" value="F:DNA binding"/>
    <property type="evidence" value="ECO:0007669"/>
    <property type="project" value="UniProtKB-KW"/>
</dbReference>
<dbReference type="GO" id="GO:0003700">
    <property type="term" value="F:DNA-binding transcription factor activity"/>
    <property type="evidence" value="ECO:0000250"/>
    <property type="project" value="TAIR"/>
</dbReference>
<dbReference type="GO" id="GO:0003729">
    <property type="term" value="F:mRNA binding"/>
    <property type="evidence" value="ECO:0007669"/>
    <property type="project" value="InterPro"/>
</dbReference>
<dbReference type="GO" id="GO:0003723">
    <property type="term" value="F:RNA binding"/>
    <property type="evidence" value="ECO:0000314"/>
    <property type="project" value="TAIR"/>
</dbReference>
<dbReference type="GO" id="GO:0008270">
    <property type="term" value="F:zinc ion binding"/>
    <property type="evidence" value="ECO:0007669"/>
    <property type="project" value="UniProtKB-KW"/>
</dbReference>
<dbReference type="GO" id="GO:1900057">
    <property type="term" value="P:positive regulation of leaf senescence"/>
    <property type="evidence" value="ECO:0000315"/>
    <property type="project" value="TAIR"/>
</dbReference>
<dbReference type="GO" id="GO:0006355">
    <property type="term" value="P:regulation of DNA-templated transcription"/>
    <property type="evidence" value="ECO:0000304"/>
    <property type="project" value="TAIR"/>
</dbReference>
<dbReference type="GO" id="GO:2000028">
    <property type="term" value="P:regulation of photoperiodism, flowering"/>
    <property type="evidence" value="ECO:0000316"/>
    <property type="project" value="TAIR"/>
</dbReference>
<dbReference type="CDD" id="cd22464">
    <property type="entry name" value="KH-I_AtC3H36_like"/>
    <property type="match status" value="1"/>
</dbReference>
<dbReference type="FunFam" id="4.10.1000.10:FF:000003">
    <property type="entry name" value="Zinc finger CCCH domain-containing protein"/>
    <property type="match status" value="1"/>
</dbReference>
<dbReference type="Gene3D" id="3.30.1370.10">
    <property type="entry name" value="K Homology domain, type 1"/>
    <property type="match status" value="1"/>
</dbReference>
<dbReference type="Gene3D" id="4.10.1000.10">
    <property type="entry name" value="Zinc finger, CCCH-type"/>
    <property type="match status" value="1"/>
</dbReference>
<dbReference type="InterPro" id="IPR004087">
    <property type="entry name" value="KH_dom"/>
</dbReference>
<dbReference type="InterPro" id="IPR004088">
    <property type="entry name" value="KH_dom_type_1"/>
</dbReference>
<dbReference type="InterPro" id="IPR036612">
    <property type="entry name" value="KH_dom_type_1_sf"/>
</dbReference>
<dbReference type="InterPro" id="IPR045877">
    <property type="entry name" value="ZFP36-like"/>
</dbReference>
<dbReference type="InterPro" id="IPR000571">
    <property type="entry name" value="Znf_CCCH"/>
</dbReference>
<dbReference type="InterPro" id="IPR036855">
    <property type="entry name" value="Znf_CCCH_sf"/>
</dbReference>
<dbReference type="PANTHER" id="PTHR12547">
    <property type="entry name" value="CCCH ZINC FINGER/TIS11-RELATED"/>
    <property type="match status" value="1"/>
</dbReference>
<dbReference type="Pfam" id="PF00013">
    <property type="entry name" value="KH_1"/>
    <property type="match status" value="1"/>
</dbReference>
<dbReference type="Pfam" id="PF00642">
    <property type="entry name" value="zf-CCCH"/>
    <property type="match status" value="2"/>
</dbReference>
<dbReference type="SMART" id="SM00322">
    <property type="entry name" value="KH"/>
    <property type="match status" value="1"/>
</dbReference>
<dbReference type="SMART" id="SM00356">
    <property type="entry name" value="ZnF_C3H1"/>
    <property type="match status" value="2"/>
</dbReference>
<dbReference type="SUPFAM" id="SSF90229">
    <property type="entry name" value="CCCH zinc finger"/>
    <property type="match status" value="2"/>
</dbReference>
<dbReference type="SUPFAM" id="SSF54791">
    <property type="entry name" value="Eukaryotic type KH-domain (KH-domain type I)"/>
    <property type="match status" value="1"/>
</dbReference>
<dbReference type="PROSITE" id="PS50084">
    <property type="entry name" value="KH_TYPE_1"/>
    <property type="match status" value="1"/>
</dbReference>
<dbReference type="PROSITE" id="PS50103">
    <property type="entry name" value="ZF_C3H1"/>
    <property type="match status" value="2"/>
</dbReference>
<proteinExistence type="evidence at protein level"/>